<protein>
    <recommendedName>
        <fullName>UPF0213 protein BPUM_0019</fullName>
    </recommendedName>
</protein>
<evidence type="ECO:0000255" key="1">
    <source>
        <dbReference type="PROSITE-ProRule" id="PRU00977"/>
    </source>
</evidence>
<evidence type="ECO:0000305" key="2"/>
<gene>
    <name type="ordered locus">BPUM_0019</name>
</gene>
<comment type="similarity">
    <text evidence="2">Belongs to the UPF0213 family.</text>
</comment>
<sequence>MEKHNHYFYVLKCADGSLYAGYTNDLQKRLMTHNSGKGAKYTRARRPVELYYHECFATKREAMQQEYRFKTWTRKKKDLYIEEMRIEKEATHEHTKKL</sequence>
<accession>A8F902</accession>
<proteinExistence type="inferred from homology"/>
<name>Y019_BACP2</name>
<dbReference type="EMBL" id="CP000813">
    <property type="protein sequence ID" value="ABV60719.1"/>
    <property type="molecule type" value="Genomic_DNA"/>
</dbReference>
<dbReference type="RefSeq" id="WP_012008645.1">
    <property type="nucleotide sequence ID" value="NC_009848.4"/>
</dbReference>
<dbReference type="SMR" id="A8F902"/>
<dbReference type="STRING" id="315750.BPUM_0019"/>
<dbReference type="GeneID" id="5619256"/>
<dbReference type="KEGG" id="bpu:BPUM_0019"/>
<dbReference type="eggNOG" id="COG2827">
    <property type="taxonomic scope" value="Bacteria"/>
</dbReference>
<dbReference type="HOGENOM" id="CLU_135650_0_3_9"/>
<dbReference type="OrthoDB" id="9807770at2"/>
<dbReference type="Proteomes" id="UP000001355">
    <property type="component" value="Chromosome"/>
</dbReference>
<dbReference type="CDD" id="cd10456">
    <property type="entry name" value="GIY-YIG_UPF0213"/>
    <property type="match status" value="1"/>
</dbReference>
<dbReference type="Gene3D" id="3.40.1440.10">
    <property type="entry name" value="GIY-YIG endonuclease"/>
    <property type="match status" value="1"/>
</dbReference>
<dbReference type="InterPro" id="IPR000305">
    <property type="entry name" value="GIY-YIG_endonuc"/>
</dbReference>
<dbReference type="InterPro" id="IPR035901">
    <property type="entry name" value="GIY-YIG_endonuc_sf"/>
</dbReference>
<dbReference type="InterPro" id="IPR050190">
    <property type="entry name" value="UPF0213_domain"/>
</dbReference>
<dbReference type="PANTHER" id="PTHR34477">
    <property type="entry name" value="UPF0213 PROTEIN YHBQ"/>
    <property type="match status" value="1"/>
</dbReference>
<dbReference type="PANTHER" id="PTHR34477:SF1">
    <property type="entry name" value="UPF0213 PROTEIN YHBQ"/>
    <property type="match status" value="1"/>
</dbReference>
<dbReference type="Pfam" id="PF01541">
    <property type="entry name" value="GIY-YIG"/>
    <property type="match status" value="1"/>
</dbReference>
<dbReference type="SMART" id="SM00465">
    <property type="entry name" value="GIYc"/>
    <property type="match status" value="1"/>
</dbReference>
<dbReference type="SUPFAM" id="SSF82771">
    <property type="entry name" value="GIY-YIG endonuclease"/>
    <property type="match status" value="1"/>
</dbReference>
<dbReference type="PROSITE" id="PS50164">
    <property type="entry name" value="GIY_YIG"/>
    <property type="match status" value="1"/>
</dbReference>
<reference key="1">
    <citation type="journal article" date="2007" name="PLoS ONE">
        <title>Paradoxical DNA repair and peroxide resistance gene conservation in Bacillus pumilus SAFR-032.</title>
        <authorList>
            <person name="Gioia J."/>
            <person name="Yerrapragada S."/>
            <person name="Qin X."/>
            <person name="Jiang H."/>
            <person name="Igboeli O.C."/>
            <person name="Muzny D."/>
            <person name="Dugan-Rocha S."/>
            <person name="Ding Y."/>
            <person name="Hawes A."/>
            <person name="Liu W."/>
            <person name="Perez L."/>
            <person name="Kovar C."/>
            <person name="Dinh H."/>
            <person name="Lee S."/>
            <person name="Nazareth L."/>
            <person name="Blyth P."/>
            <person name="Holder M."/>
            <person name="Buhay C."/>
            <person name="Tirumalai M.R."/>
            <person name="Liu Y."/>
            <person name="Dasgupta I."/>
            <person name="Bokhetache L."/>
            <person name="Fujita M."/>
            <person name="Karouia F."/>
            <person name="Eswara Moorthy P."/>
            <person name="Siefert J."/>
            <person name="Uzman A."/>
            <person name="Buzumbo P."/>
            <person name="Verma A."/>
            <person name="Zwiya H."/>
            <person name="McWilliams B.D."/>
            <person name="Olowu A."/>
            <person name="Clinkenbeard K.D."/>
            <person name="Newcombe D."/>
            <person name="Golebiewski L."/>
            <person name="Petrosino J.F."/>
            <person name="Nicholson W.L."/>
            <person name="Fox G.E."/>
            <person name="Venkateswaran K."/>
            <person name="Highlander S.K."/>
            <person name="Weinstock G.M."/>
        </authorList>
    </citation>
    <scope>NUCLEOTIDE SEQUENCE [LARGE SCALE GENOMIC DNA]</scope>
    <source>
        <strain>SAFR-032</strain>
    </source>
</reference>
<feature type="chain" id="PRO_1000063660" description="UPF0213 protein BPUM_0019">
    <location>
        <begin position="1"/>
        <end position="98"/>
    </location>
</feature>
<feature type="domain" description="GIY-YIG" evidence="1">
    <location>
        <begin position="4"/>
        <end position="79"/>
    </location>
</feature>
<organism>
    <name type="scientific">Bacillus pumilus (strain SAFR-032)</name>
    <dbReference type="NCBI Taxonomy" id="315750"/>
    <lineage>
        <taxon>Bacteria</taxon>
        <taxon>Bacillati</taxon>
        <taxon>Bacillota</taxon>
        <taxon>Bacilli</taxon>
        <taxon>Bacillales</taxon>
        <taxon>Bacillaceae</taxon>
        <taxon>Bacillus</taxon>
    </lineage>
</organism>